<feature type="signal peptide" evidence="2">
    <location>
        <begin position="1"/>
        <end position="17"/>
    </location>
</feature>
<feature type="chain" id="PRO_5015339509" description="NLP effector protein Pc118356">
    <location>
        <begin position="18"/>
        <end position="252"/>
    </location>
</feature>
<feature type="short sequence motif" description="Hepta-peptide GHRHDWE motif" evidence="1">
    <location>
        <begin position="121"/>
        <end position="127"/>
    </location>
</feature>
<feature type="glycosylation site" description="N-linked (GlcNAc...) asparagine" evidence="3">
    <location>
        <position position="20"/>
    </location>
</feature>
<feature type="glycosylation site" description="N-linked (GlcNAc...) asparagine" evidence="3">
    <location>
        <position position="67"/>
    </location>
</feature>
<feature type="glycosylation site" description="N-linked (GlcNAc...) asparagine" evidence="3">
    <location>
        <position position="166"/>
    </location>
</feature>
<accession>A0A2R2Z561</accession>
<dbReference type="EMBL" id="MF135590">
    <property type="protein sequence ID" value="AUD40036.1"/>
    <property type="molecule type" value="mRNA"/>
</dbReference>
<dbReference type="SMR" id="A0A2R2Z561"/>
<dbReference type="VEuPathDB" id="FungiDB:DVH05_010037"/>
<dbReference type="PHI-base" id="PHI:8057"/>
<dbReference type="GO" id="GO:0005576">
    <property type="term" value="C:extracellular region"/>
    <property type="evidence" value="ECO:0007669"/>
    <property type="project" value="UniProtKB-SubCell"/>
</dbReference>
<dbReference type="InterPro" id="IPR008701">
    <property type="entry name" value="NPP1"/>
</dbReference>
<dbReference type="PANTHER" id="PTHR33657">
    <property type="entry name" value="DOMAIN PROTEIN, PUTATIVE (AFU_ORTHOLOGUE AFUA_5G00600)-RELATED"/>
    <property type="match status" value="1"/>
</dbReference>
<dbReference type="PANTHER" id="PTHR33657:SF8">
    <property type="entry name" value="DOMAIN PROTEIN, PUTATIVE (AFU_ORTHOLOGUE AFUA_5G00600)-RELATED"/>
    <property type="match status" value="1"/>
</dbReference>
<dbReference type="Pfam" id="PF05630">
    <property type="entry name" value="NPP1"/>
    <property type="match status" value="1"/>
</dbReference>
<dbReference type="PIRSF" id="PIRSF029958">
    <property type="entry name" value="Necrosis-inducing_protein"/>
    <property type="match status" value="1"/>
</dbReference>
<evidence type="ECO:0000250" key="1">
    <source>
        <dbReference type="UniProtKB" id="L7NCS1"/>
    </source>
</evidence>
<evidence type="ECO:0000255" key="2"/>
<evidence type="ECO:0000255" key="3">
    <source>
        <dbReference type="PROSITE-ProRule" id="PRU00498"/>
    </source>
</evidence>
<evidence type="ECO:0000269" key="4">
    <source>
    </source>
</evidence>
<evidence type="ECO:0000303" key="5">
    <source>
    </source>
</evidence>
<evidence type="ECO:0000305" key="6"/>
<evidence type="ECO:0000305" key="7">
    <source>
    </source>
</evidence>
<organism>
    <name type="scientific">Phytophthora capsici</name>
    <dbReference type="NCBI Taxonomy" id="4784"/>
    <lineage>
        <taxon>Eukaryota</taxon>
        <taxon>Sar</taxon>
        <taxon>Stramenopiles</taxon>
        <taxon>Oomycota</taxon>
        <taxon>Peronosporales</taxon>
        <taxon>Peronosporaceae</taxon>
        <taxon>Phytophthora</taxon>
    </lineage>
</organism>
<sequence length="252" mass="28427">MALTVLAATALTALIMGKNNGTLMDHDKVKPFAQPIPTNSFEEAAVKYKPELFVSYGCHPYPAVQANGSVSAGLEGSGPDDGECKGSRLGSQVYSRSDWYNDKWAIMYTWYLPKGRSGKLQDRHFWETAVIWIDDPTLEDSKLLGVSLNYEDRRVSKIAIKGRHLNASKVLKFESYEAEKSPKPRLRFTEKAGKTQDLITWDQLPAKARKGLSTTKFYSSPFGSVKREMPLKDEVFLKRLKDAWPFSNKHDE</sequence>
<gene>
    <name evidence="5" type="ORF">Pc118356</name>
</gene>
<proteinExistence type="evidence at transcript level"/>
<name>NLP56_PHYCP</name>
<comment type="function">
    <text evidence="4">Secreted effector that contributes strongly to virulence during infection by P.capsici.</text>
</comment>
<comment type="subcellular location">
    <subcellularLocation>
        <location evidence="7">Secreted</location>
    </subcellularLocation>
</comment>
<comment type="domain">
    <text evidence="7">Key residues/motif important for the effector activities are degenerated in most NLPs, including the nlp24 peptide consisting of the conserved region I (11-aa immunogenic part) and conserved region II (the heptapeptide GHRHDWE motif) that is important for phytotoxic activity.</text>
</comment>
<comment type="similarity">
    <text evidence="6">Belongs to the Necrosis inducing protein (NPP1) family.</text>
</comment>
<reference key="1">
    <citation type="submission" date="2017-05" db="EMBL/GenBank/DDBJ databases">
        <authorList>
            <person name="Song R."/>
            <person name="Chenine A.L."/>
            <person name="Ruprecht R.M."/>
        </authorList>
    </citation>
    <scope>NUCLEOTIDE SEQUENCE [MRNA]</scope>
    <source>
        <strain>Pc537</strain>
    </source>
</reference>
<reference key="2">
    <citation type="journal article" date="2018" name="Mol. Genet. Genomics">
        <title>Identification and functional analysis of the NLP-encoding genes from the phytopathogenic oomycete Phytophthora capsici.</title>
        <authorList>
            <person name="Chen X.R."/>
            <person name="Huang S.X."/>
            <person name="Zhang Y."/>
            <person name="Sheng G.L."/>
            <person name="Li Y.P."/>
            <person name="Zhu F."/>
        </authorList>
    </citation>
    <scope>NUCLEOTIDE SEQUENCE [MRNA]</scope>
    <scope>FUNCTION</scope>
    <scope>DOMAIN</scope>
    <source>
        <strain>Pc537</strain>
    </source>
</reference>
<protein>
    <recommendedName>
        <fullName evidence="5">NLP effector protein Pc118356</fullName>
    </recommendedName>
    <alternativeName>
        <fullName evidence="5">Necrosis-inducing Pc118356</fullName>
    </alternativeName>
    <alternativeName>
        <fullName evidence="5">Nep1-like protein Pc118356</fullName>
    </alternativeName>
</protein>
<keyword id="KW-0325">Glycoprotein</keyword>
<keyword id="KW-0964">Secreted</keyword>
<keyword id="KW-0732">Signal</keyword>
<keyword id="KW-0843">Virulence</keyword>